<reference evidence="19" key="1">
    <citation type="journal article" date="1998" name="J. Bacteriol.">
        <title>Acquisition of five high-Mr penicillin-binding protein variants during transfer of high-level beta-lactam resistance from Streptococcus mitis to Streptococcus pneumoniae.</title>
        <authorList>
            <person name="Hakenbeck R."/>
            <person name="Konig A."/>
            <person name="Kern I."/>
            <person name="van der Linden M."/>
            <person name="Keck W."/>
            <person name="Billot-Klein D."/>
            <person name="Legrand R."/>
            <person name="Schoot B."/>
            <person name="Gutmann L."/>
        </authorList>
    </citation>
    <scope>NUCLEOTIDE SEQUENCE [GENOMIC DNA]</scope>
    <source>
        <strain evidence="13 19">ATCC BAA-255 / R6</strain>
    </source>
</reference>
<reference evidence="18 20" key="2">
    <citation type="journal article" date="2001" name="J. Bacteriol.">
        <title>Genome of the bacterium Streptococcus pneumoniae strain R6.</title>
        <authorList>
            <person name="Hoskins J."/>
            <person name="Alborn W.E. Jr."/>
            <person name="Arnold J."/>
            <person name="Blaszczak L.C."/>
            <person name="Burgett S."/>
            <person name="DeHoff B.S."/>
            <person name="Estrem S.T."/>
            <person name="Fritz L."/>
            <person name="Fu D.-J."/>
            <person name="Fuller W."/>
            <person name="Geringer C."/>
            <person name="Gilmour R."/>
            <person name="Glass J.S."/>
            <person name="Khoja H."/>
            <person name="Kraft A.R."/>
            <person name="Lagace R.E."/>
            <person name="LeBlanc D.J."/>
            <person name="Lee L.N."/>
            <person name="Lefkowitz E.J."/>
            <person name="Lu J."/>
            <person name="Matsushima P."/>
            <person name="McAhren S.M."/>
            <person name="McHenney M."/>
            <person name="McLeaster K."/>
            <person name="Mundy C.W."/>
            <person name="Nicas T.I."/>
            <person name="Norris F.H."/>
            <person name="O'Gara M."/>
            <person name="Peery R.B."/>
            <person name="Robertson G.T."/>
            <person name="Rockey P."/>
            <person name="Sun P.-M."/>
            <person name="Winkler M.E."/>
            <person name="Yang Y."/>
            <person name="Young-Bellido M."/>
            <person name="Zhao G."/>
            <person name="Zook C.A."/>
            <person name="Baltz R.H."/>
            <person name="Jaskunas S.R."/>
            <person name="Rosteck P.R. Jr."/>
            <person name="Skatrud P.L."/>
            <person name="Glass J.I."/>
        </authorList>
    </citation>
    <scope>NUCLEOTIDE SEQUENCE [LARGE SCALE GENOMIC DNA]</scope>
    <source>
        <strain evidence="20">ATCC BAA-255 / R6</strain>
    </source>
</reference>
<reference key="3">
    <citation type="journal article" date="1999" name="J. Bacteriol.">
        <title>Glycosyltransferase domain of penicillin-binding protein 2a from Streptococcus pneumoniae is membrane associated.</title>
        <authorList>
            <person name="di Guilmi A.M."/>
            <person name="Mouz N."/>
            <person name="Martin L."/>
            <person name="Hoskins J."/>
            <person name="Jaskunas S.R."/>
            <person name="Dideberg O."/>
            <person name="Vernet T."/>
        </authorList>
    </citation>
    <scope>PROTEIN SEQUENCE OF 78-81; 156-161; 264-267 AND 301-304</scope>
    <scope>FUNCTION</scope>
    <scope>CATALYTIC ACTIVITY</scope>
    <scope>SUBCELLULAR LOCATION</scope>
    <scope>DOMAIN</scope>
    <scope>TOPOLOGY</scope>
    <scope>REGIONS</scope>
    <source>
        <strain evidence="10">ATCC BAA-255 / R6</strain>
    </source>
</reference>
<reference key="4">
    <citation type="journal article" date="2003" name="J. Bacteriol.">
        <title>The glycosyltransferase domain of penicillin-binding protein 2a from Streptococcus pneumoniae catalyzes the polymerization of murein glycan chains.</title>
        <authorList>
            <person name="Di Guilmi A.M."/>
            <person name="Dessen A."/>
            <person name="Dideberg O."/>
            <person name="Vernet T."/>
        </authorList>
    </citation>
    <scope>FUNCTION</scope>
    <scope>CATALYTIC ACTIVITY</scope>
    <scope>ACTIVITY REGULATION</scope>
    <scope>BIOPHYSICOCHEMICAL PROPERTIES</scope>
    <scope>SUBCELLULAR LOCATION</scope>
    <scope>DOMAIN</scope>
    <scope>BIOTECHNOLOGY</scope>
    <scope>TOPOLOGY</scope>
    <scope>REGIONS</scope>
    <source>
        <strain evidence="11">ATCC BAA-255 / R6</strain>
    </source>
</reference>
<reference key="5">
    <citation type="journal article" date="2012" name="FEBS J.">
        <title>The membrane anchor of penicillin-binding protein PBP2a from Streptococcus pneumoniae influences peptidoglycan chain length.</title>
        <authorList>
            <person name="Helassa N."/>
            <person name="Vollmer W."/>
            <person name="Breukink E."/>
            <person name="Vernet T."/>
            <person name="Zapun A."/>
        </authorList>
    </citation>
    <scope>FUNCTION</scope>
    <scope>CATALYTIC ACTIVITY</scope>
    <scope>ACTIVITY REGULATION</scope>
    <scope>BIOPHYSICOCHEMICAL PROPERTIES</scope>
    <scope>SUBUNIT</scope>
    <scope>SUBCELLULAR LOCATION</scope>
    <scope>DOMAIN</scope>
    <scope>MASS SPECTROMETRY</scope>
    <scope>TOPOLOGY</scope>
    <scope>ACTIVE SITE</scope>
    <scope>MUTAGENESIS OF GLU-131</scope>
    <source>
        <strain evidence="12">ATCC BAA-255 / R6</strain>
    </source>
</reference>
<reference key="6">
    <citation type="journal article" date="2017" name="Mol. Microbiol.">
        <title>Identification of EloR (Spr1851) as a regulator of cell elongation in Streptococcus pneumoniae.</title>
        <authorList>
            <person name="Stamsaas G.A."/>
            <person name="Straume D."/>
            <person name="Ruud Winther A."/>
            <person name="Kjos M."/>
            <person name="Frantzen C.A."/>
            <person name="Haavarstein L.S."/>
        </authorList>
    </citation>
    <scope>SUBUNIT</scope>
    <source>
        <strain>R6 / R704</strain>
    </source>
</reference>
<protein>
    <recommendedName>
        <fullName evidence="10 11 12 13">Penicillin-binding protein 2a</fullName>
        <shortName evidence="10 11 12 13">PBP2a</shortName>
    </recommendedName>
    <alternativeName>
        <fullName evidence="14">Cell wall synthase PBP2a</fullName>
    </alternativeName>
    <domain>
        <recommendedName>
            <fullName evidence="14">Penicillin-insensitive transglycosylase</fullName>
            <ecNumber evidence="7 8">2.4.99.28</ecNumber>
        </recommendedName>
        <alternativeName>
            <fullName evidence="14">Peptidoglycan TGase</fullName>
        </alternativeName>
        <alternativeName>
            <fullName evidence="14">Peptidoglycan glycosyltransferase</fullName>
        </alternativeName>
    </domain>
    <domain>
        <recommendedName>
            <fullName evidence="14">Penicillin-sensitive transpeptidase</fullName>
            <ecNumber evidence="6 8">3.4.16.4</ecNumber>
        </recommendedName>
        <alternativeName>
            <fullName evidence="14">DD-transpeptidase</fullName>
        </alternativeName>
    </domain>
</protein>
<evidence type="ECO:0000250" key="1">
    <source>
        <dbReference type="UniProtKB" id="A0A0H2ZMF9"/>
    </source>
</evidence>
<evidence type="ECO:0000250" key="2">
    <source>
        <dbReference type="UniProtKB" id="P02918"/>
    </source>
</evidence>
<evidence type="ECO:0000250" key="3">
    <source>
        <dbReference type="UniProtKB" id="P02919"/>
    </source>
</evidence>
<evidence type="ECO:0000255" key="4"/>
<evidence type="ECO:0000256" key="5">
    <source>
        <dbReference type="SAM" id="MobiDB-lite"/>
    </source>
</evidence>
<evidence type="ECO:0000269" key="6">
    <source>
    </source>
</evidence>
<evidence type="ECO:0000269" key="7">
    <source>
    </source>
</evidence>
<evidence type="ECO:0000269" key="8">
    <source>
    </source>
</evidence>
<evidence type="ECO:0000269" key="9">
    <source>
    </source>
</evidence>
<evidence type="ECO:0000303" key="10">
    <source>
    </source>
</evidence>
<evidence type="ECO:0000303" key="11">
    <source>
    </source>
</evidence>
<evidence type="ECO:0000303" key="12">
    <source>
    </source>
</evidence>
<evidence type="ECO:0000303" key="13">
    <source>
    </source>
</evidence>
<evidence type="ECO:0000305" key="14"/>
<evidence type="ECO:0000305" key="15">
    <source>
    </source>
</evidence>
<evidence type="ECO:0000305" key="16">
    <source>
    </source>
</evidence>
<evidence type="ECO:0000305" key="17">
    <source>
    </source>
</evidence>
<evidence type="ECO:0000312" key="18">
    <source>
        <dbReference type="EMBL" id="AAL00626.1"/>
    </source>
</evidence>
<evidence type="ECO:0000312" key="19">
    <source>
        <dbReference type="EMBL" id="CAA05303.1"/>
    </source>
</evidence>
<evidence type="ECO:0000312" key="20">
    <source>
        <dbReference type="Proteomes" id="UP000000586"/>
    </source>
</evidence>
<dbReference type="EC" id="2.4.99.28" evidence="7 8"/>
<dbReference type="EC" id="3.4.16.4" evidence="6 8"/>
<dbReference type="EMBL" id="AJ002292">
    <property type="protein sequence ID" value="CAA05303.1"/>
    <property type="molecule type" value="Genomic_DNA"/>
</dbReference>
<dbReference type="EMBL" id="AE007317">
    <property type="protein sequence ID" value="AAL00626.1"/>
    <property type="molecule type" value="Genomic_DNA"/>
</dbReference>
<dbReference type="PIR" id="E98099">
    <property type="entry name" value="E98099"/>
</dbReference>
<dbReference type="RefSeq" id="NP_359415.1">
    <property type="nucleotide sequence ID" value="NC_003098.1"/>
</dbReference>
<dbReference type="RefSeq" id="WP_000762624.1">
    <property type="nucleotide sequence ID" value="NC_003098.1"/>
</dbReference>
<dbReference type="SMR" id="Q8DNB6"/>
<dbReference type="MINT" id="Q8DNB6"/>
<dbReference type="STRING" id="171101.spr1823"/>
<dbReference type="DrugBank" id="DB01163">
    <property type="generic name" value="Amdinocillin"/>
</dbReference>
<dbReference type="DrugBank" id="DB00415">
    <property type="generic name" value="Ampicillin"/>
</dbReference>
<dbReference type="DrugBank" id="DB08795">
    <property type="generic name" value="Azidocillin"/>
</dbReference>
<dbReference type="DrugBank" id="DB00456">
    <property type="generic name" value="Cefalotin"/>
</dbReference>
<dbReference type="DrugBank" id="DB00493">
    <property type="generic name" value="Cefotaxime"/>
</dbReference>
<dbReference type="DrugBank" id="DB01331">
    <property type="generic name" value="Cefoxitin"/>
</dbReference>
<dbReference type="DrugBank" id="DB00567">
    <property type="generic name" value="Cephalexin"/>
</dbReference>
<dbReference type="DrugBank" id="DB03313">
    <property type="generic name" value="Cephalosporin C"/>
</dbReference>
<dbReference type="DrugBank" id="DB00485">
    <property type="generic name" value="Dicloxacillin"/>
</dbReference>
<dbReference type="DrugBank" id="DB00739">
    <property type="generic name" value="Hetacillin"/>
</dbReference>
<dbReference type="DrugBank" id="DB01603">
    <property type="generic name" value="Meticillin"/>
</dbReference>
<dbReference type="DrugBank" id="DB00607">
    <property type="generic name" value="Nafcillin"/>
</dbReference>
<dbReference type="DrugBank" id="DB00713">
    <property type="generic name" value="Oxacillin"/>
</dbReference>
<dbReference type="DrugBank" id="DB00319">
    <property type="generic name" value="Piperacillin"/>
</dbReference>
<dbReference type="CAZy" id="GT51">
    <property type="family name" value="Glycosyltransferase Family 51"/>
</dbReference>
<dbReference type="KEGG" id="spr:spr1823"/>
<dbReference type="PATRIC" id="fig|171101.6.peg.1967"/>
<dbReference type="eggNOG" id="COG0744">
    <property type="taxonomic scope" value="Bacteria"/>
</dbReference>
<dbReference type="HOGENOM" id="CLU_006354_2_2_9"/>
<dbReference type="UniPathway" id="UPA00219"/>
<dbReference type="PRO" id="PR:Q8DNB6"/>
<dbReference type="Proteomes" id="UP000000586">
    <property type="component" value="Chromosome"/>
</dbReference>
<dbReference type="GO" id="GO:0005576">
    <property type="term" value="C:extracellular region"/>
    <property type="evidence" value="ECO:0007669"/>
    <property type="project" value="UniProtKB-KW"/>
</dbReference>
<dbReference type="GO" id="GO:0030288">
    <property type="term" value="C:outer membrane-bounded periplasmic space"/>
    <property type="evidence" value="ECO:0000318"/>
    <property type="project" value="GO_Central"/>
</dbReference>
<dbReference type="GO" id="GO:0005886">
    <property type="term" value="C:plasma membrane"/>
    <property type="evidence" value="ECO:0007669"/>
    <property type="project" value="UniProtKB-SubCell"/>
</dbReference>
<dbReference type="GO" id="GO:0016746">
    <property type="term" value="F:acyltransferase activity"/>
    <property type="evidence" value="ECO:0007669"/>
    <property type="project" value="UniProtKB-KW"/>
</dbReference>
<dbReference type="GO" id="GO:0008658">
    <property type="term" value="F:penicillin binding"/>
    <property type="evidence" value="ECO:0007669"/>
    <property type="project" value="InterPro"/>
</dbReference>
<dbReference type="GO" id="GO:0008955">
    <property type="term" value="F:peptidoglycan glycosyltransferase activity"/>
    <property type="evidence" value="ECO:0000318"/>
    <property type="project" value="GO_Central"/>
</dbReference>
<dbReference type="GO" id="GO:0009002">
    <property type="term" value="F:serine-type D-Ala-D-Ala carboxypeptidase activity"/>
    <property type="evidence" value="ECO:0007669"/>
    <property type="project" value="UniProtKB-EC"/>
</dbReference>
<dbReference type="GO" id="GO:0071555">
    <property type="term" value="P:cell wall organization"/>
    <property type="evidence" value="ECO:0007669"/>
    <property type="project" value="UniProtKB-KW"/>
</dbReference>
<dbReference type="GO" id="GO:0009252">
    <property type="term" value="P:peptidoglycan biosynthetic process"/>
    <property type="evidence" value="ECO:0000318"/>
    <property type="project" value="GO_Central"/>
</dbReference>
<dbReference type="GO" id="GO:0006508">
    <property type="term" value="P:proteolysis"/>
    <property type="evidence" value="ECO:0007669"/>
    <property type="project" value="UniProtKB-KW"/>
</dbReference>
<dbReference type="GO" id="GO:0008360">
    <property type="term" value="P:regulation of cell shape"/>
    <property type="evidence" value="ECO:0007669"/>
    <property type="project" value="UniProtKB-KW"/>
</dbReference>
<dbReference type="GO" id="GO:0046677">
    <property type="term" value="P:response to antibiotic"/>
    <property type="evidence" value="ECO:0007669"/>
    <property type="project" value="UniProtKB-KW"/>
</dbReference>
<dbReference type="FunFam" id="1.10.3810.10:FF:000001">
    <property type="entry name" value="Penicillin-binding protein 1A"/>
    <property type="match status" value="1"/>
</dbReference>
<dbReference type="FunFam" id="3.40.710.10:FF:000043">
    <property type="entry name" value="Penicillin-binding protein 2A"/>
    <property type="match status" value="1"/>
</dbReference>
<dbReference type="Gene3D" id="6.20.370.110">
    <property type="match status" value="1"/>
</dbReference>
<dbReference type="Gene3D" id="1.10.3810.10">
    <property type="entry name" value="Biosynthetic peptidoglycan transglycosylase-like"/>
    <property type="match status" value="1"/>
</dbReference>
<dbReference type="Gene3D" id="3.40.710.10">
    <property type="entry name" value="DD-peptidase/beta-lactamase superfamily"/>
    <property type="match status" value="1"/>
</dbReference>
<dbReference type="InterPro" id="IPR012338">
    <property type="entry name" value="Beta-lactam/transpept-like"/>
</dbReference>
<dbReference type="InterPro" id="IPR053473">
    <property type="entry name" value="Cell_Wall_Biosynth_Protein"/>
</dbReference>
<dbReference type="InterPro" id="IPR001264">
    <property type="entry name" value="Glyco_trans_51"/>
</dbReference>
<dbReference type="InterPro" id="IPR050396">
    <property type="entry name" value="Glycosyltr_51/Transpeptidase"/>
</dbReference>
<dbReference type="InterPro" id="IPR023346">
    <property type="entry name" value="Lysozyme-like_dom_sf"/>
</dbReference>
<dbReference type="InterPro" id="IPR036950">
    <property type="entry name" value="PBP_transglycosylase"/>
</dbReference>
<dbReference type="InterPro" id="IPR001460">
    <property type="entry name" value="PCN-bd_Tpept"/>
</dbReference>
<dbReference type="NCBIfam" id="TIGR02074">
    <property type="entry name" value="PBP_1a_fam"/>
    <property type="match status" value="1"/>
</dbReference>
<dbReference type="NCBIfam" id="NF038276">
    <property type="entry name" value="strep_PBP2A"/>
    <property type="match status" value="1"/>
</dbReference>
<dbReference type="PANTHER" id="PTHR32282">
    <property type="entry name" value="BINDING PROTEIN TRANSPEPTIDASE, PUTATIVE-RELATED"/>
    <property type="match status" value="1"/>
</dbReference>
<dbReference type="PANTHER" id="PTHR32282:SF32">
    <property type="entry name" value="PENICILLIN-BINDING PROTEIN 2A"/>
    <property type="match status" value="1"/>
</dbReference>
<dbReference type="Pfam" id="PF00912">
    <property type="entry name" value="Transgly"/>
    <property type="match status" value="1"/>
</dbReference>
<dbReference type="Pfam" id="PF00905">
    <property type="entry name" value="Transpeptidase"/>
    <property type="match status" value="1"/>
</dbReference>
<dbReference type="SUPFAM" id="SSF56601">
    <property type="entry name" value="beta-lactamase/transpeptidase-like"/>
    <property type="match status" value="1"/>
</dbReference>
<dbReference type="SUPFAM" id="SSF53955">
    <property type="entry name" value="Lysozyme-like"/>
    <property type="match status" value="1"/>
</dbReference>
<feature type="chain" id="PRO_0000452973" description="Penicillin-binding protein 2a">
    <location>
        <begin position="1"/>
        <end position="731"/>
    </location>
</feature>
<feature type="topological domain" description="Cytoplasmic" evidence="4 15 16 17">
    <location>
        <begin position="1"/>
        <end position="56"/>
    </location>
</feature>
<feature type="transmembrane region" description="Helical; Signal-anchor for type II membrane protein" evidence="4 15 16 17">
    <location>
        <begin position="57"/>
        <end position="77"/>
    </location>
</feature>
<feature type="topological domain" description="Extracellular" evidence="4 15 16 17">
    <location>
        <begin position="78"/>
        <end position="731"/>
    </location>
</feature>
<feature type="region of interest" description="Transglycosylase" evidence="15 16">
    <location>
        <begin position="78"/>
        <end position="300"/>
    </location>
</feature>
<feature type="region of interest" description="Hydrophobic; associated with cytoplasmic membrane. Required for transglycosylase activity, but not for lipid II binding" evidence="6 7">
    <location>
        <begin position="78"/>
        <end position="156"/>
    </location>
</feature>
<feature type="region of interest" description="Transpeptidase" evidence="15 16">
    <location>
        <begin position="301"/>
        <end position="731"/>
    </location>
</feature>
<feature type="region of interest" description="Disordered" evidence="5">
    <location>
        <begin position="674"/>
        <end position="694"/>
    </location>
</feature>
<feature type="compositionally biased region" description="Polar residues" evidence="5">
    <location>
        <begin position="676"/>
        <end position="690"/>
    </location>
</feature>
<feature type="active site" description="Proton donor; for transglycosylase activity" evidence="8">
    <location>
        <position position="131"/>
    </location>
</feature>
<feature type="active site" description="Acyl-ester intermediate; for transpeptidase activity" evidence="3">
    <location>
        <position position="410"/>
    </location>
</feature>
<feature type="mutagenesis site" description="Loss of transglycosylase activity with dansylated lipid II as substrate." evidence="8">
    <original>E</original>
    <variation>Q</variation>
    <location>
        <position position="131"/>
    </location>
</feature>
<feature type="sequence conflict" description="In Ref. 1; CAA05303." evidence="14" ref="1">
    <original>D</original>
    <variation>N</variation>
    <location>
        <position position="704"/>
    </location>
</feature>
<feature type="sequence conflict" description="In Ref. 1; CAA05303." evidence="14" ref="1">
    <original>R</original>
    <variation>H</variation>
    <location>
        <position position="731"/>
    </location>
</feature>
<keyword id="KW-0012">Acyltransferase</keyword>
<keyword id="KW-0046">Antibiotic resistance</keyword>
<keyword id="KW-0121">Carboxypeptidase</keyword>
<keyword id="KW-1003">Cell membrane</keyword>
<keyword id="KW-0133">Cell shape</keyword>
<keyword id="KW-0134">Cell wall</keyword>
<keyword id="KW-0961">Cell wall biogenesis/degradation</keyword>
<keyword id="KW-0903">Direct protein sequencing</keyword>
<keyword id="KW-0328">Glycosyltransferase</keyword>
<keyword id="KW-0378">Hydrolase</keyword>
<keyword id="KW-0472">Membrane</keyword>
<keyword id="KW-0511">Multifunctional enzyme</keyword>
<keyword id="KW-0573">Peptidoglycan synthesis</keyword>
<keyword id="KW-0645">Protease</keyword>
<keyword id="KW-1185">Reference proteome</keyword>
<keyword id="KW-0964">Secreted</keyword>
<keyword id="KW-0735">Signal-anchor</keyword>
<keyword id="KW-0808">Transferase</keyword>
<keyword id="KW-0812">Transmembrane</keyword>
<keyword id="KW-1133">Transmembrane helix</keyword>
<accession>Q8DNB6</accession>
<accession>O70039</accession>
<sequence length="731" mass="80799">MKLDKLFEKFLSLFKKETSELEDSDSTILRRSRSDRKKLAQVGPIRKFWRRYHLTKIILILGLSAGLLVGIYLFAVAKSTNVNDLQNALKTRTLIFDREEKEAGALSGQKGTYVELTDISKNLQNAVIATEDRSFYKNDGINYGRFFLAIVTAGRSGGGSTITQQLAKNAYLSQDQTVERKAKEFFLALELSKKYSKEQILTMYLNNAYFGNGVWGVEDASKKYFGVSASEVSLDQAATLAGMLKGPELYNPLNSVEDSTNRRDTVLQNMVAAGYIDKNQETEAAEVDMTSQLHDKYEGKISDYRYPSYFDAVVNEAVSKYNLTEEEIVNNGYRIYTELDQNYQANMQIVYENTSLFPRAEDGTFAQSGSVALEPKTGGVRGVVGQVADNDKTGFRNFNYATQSKRSPGSTIKPLVVYTPAVEAGWALNKQLDNHTMQYDSYKVDNYAGIKTSREVPMYQSLAESLNLPAVATVNDLGVDKAFEAGEKFGLNMEKVDRVLGVALGSGVETNPLQMAQAYAAFANEGLMPEAHFISRIENASGQVIASHKNSQKRVIDKSVADKMTSMMLGTFTNGTGISSSPADYVMAGKTGTTEAVFNPEYTSDQWVIGYTPDVVISHWLGFPTTDENHYLAGSTSNGAAHVFRNIANTILPYTPGSTFTVENAYKQNGIAPANTKRQVQTNDNSQTDDNLSDIRGRAQSLVDEASRAISDAKIKEKAQTIWDSIVNLFR</sequence>
<name>PBP2A_STRR6</name>
<gene>
    <name evidence="18 19" type="primary">pbp2a</name>
    <name evidence="18" type="ordered locus">spr1823</name>
</gene>
<organism evidence="18">
    <name type="scientific">Streptococcus pneumoniae (strain ATCC BAA-255 / R6)</name>
    <dbReference type="NCBI Taxonomy" id="171101"/>
    <lineage>
        <taxon>Bacteria</taxon>
        <taxon>Bacillati</taxon>
        <taxon>Bacillota</taxon>
        <taxon>Bacilli</taxon>
        <taxon>Lactobacillales</taxon>
        <taxon>Streptococcaceae</taxon>
        <taxon>Streptococcus</taxon>
    </lineage>
</organism>
<proteinExistence type="evidence at protein level"/>
<comment type="function">
    <text evidence="2 6 7 8">Cell wall formation. Synthesis of cross-linked peptidoglycan (PG) from the lipid intermediates (By similarity). Binds dansylated lipid II and catalyzes the polymerization of glycan chains (PubMed:12867450, PubMed:22487093). Hydrolyzes S2d (N-benzoyl-D-alanylmercaptoacetic acid) molecule, a synthetic thiolester analog of cell wall stem peptide (PubMed:10217767, PubMed:22487093). Active against bocillin, a fluorescent penicillin. No transpeptidase activity with non-fluorescent lysine-containing lipid II as substrate (PubMed:22487093).</text>
</comment>
<comment type="catalytic activity">
    <reaction evidence="6 8">
        <text>Preferential cleavage: (Ac)2-L-Lys-D-Ala-|-D-Ala. Also transpeptidation of peptidyl-alanyl moieties that are N-acyl substituents of D-alanine.</text>
        <dbReference type="EC" id="3.4.16.4"/>
    </reaction>
</comment>
<comment type="catalytic activity">
    <reaction evidence="7 8">
        <text>[GlcNAc-(1-&gt;4)-Mur2Ac(oyl-L-Ala-gamma-D-Glu-L-Lys-D-Ala-D-Ala)](n)-di-trans,octa-cis-undecaprenyl diphosphate + beta-D-GlcNAc-(1-&gt;4)-Mur2Ac(oyl-L-Ala-gamma-D-Glu-L-Lys-D-Ala-D-Ala)-di-trans,octa-cis-undecaprenyl diphosphate = [GlcNAc-(1-&gt;4)-Mur2Ac(oyl-L-Ala-gamma-D-Glu-L-Lys-D-Ala-D-Ala)](n+1)-di-trans,octa-cis-undecaprenyl diphosphate + di-trans,octa-cis-undecaprenyl diphosphate + H(+)</text>
        <dbReference type="Rhea" id="RHEA:23708"/>
        <dbReference type="Rhea" id="RHEA-COMP:9602"/>
        <dbReference type="Rhea" id="RHEA-COMP:9603"/>
        <dbReference type="ChEBI" id="CHEBI:15378"/>
        <dbReference type="ChEBI" id="CHEBI:58405"/>
        <dbReference type="ChEBI" id="CHEBI:60033"/>
        <dbReference type="ChEBI" id="CHEBI:78435"/>
        <dbReference type="EC" id="2.4.99.28"/>
    </reaction>
</comment>
<comment type="activity regulation">
    <text evidence="7 8">Optimal transglycosylase/glycosyltransferase (GT) activity in the presence of 30-40% dimethylsulfoxide and 0.002% Triton X-100. High GT activity in the presence of CHAPS, Triton X-100 and n-dodecyl-beta-D-maltopyranoside (DDM) detergents, and to a lesser extent in the presence of Cymal-5 (PubMed:22487093). GT activity is inhibited by moenomycin (PubMed:12867450, PubMed:22487093). 50% inhibition of the GT activity with 2.8 uM moenomycin. No effect on GT activity detected with 2.8 uM vancomycin, but complete inhibition with 28 uM vancomycin (PubMed:12867450). No GT activity in the presence of n-octyl-beta-D-glucopyranoside, Cymal-3 and Cymal-4 detergents (PubMed:22487093).</text>
</comment>
<comment type="biophysicochemical properties">
    <kinetics>
        <KM evidence="7">40.6 uM for dansylated lipid II</KM>
        <Vmax evidence="8">0.38 nmol/min/mg enzyme with lysine-dansylated lipid II as substrate (at pH 7.5 and 30 degrees Celsius in the presence of 25% dimethylsulfoxide and 0.04 Triton X-100)</Vmax>
        <Vmax evidence="8">403.0 nmol/min/mg enzyme for the hydrolysis of S2d (N-benzoyl-D-alanylmercaptoacetic acid) (at pH 7.0 and 37 degrees Celsius)</Vmax>
        <text evidence="7 8">kcat is greater than 0.0005 sec(-1) with dansylated lipid II as substrate (PubMed:22487093). kcat/KM is 0.001 M(-1)sec(-1) with dansylated lipid II as substrate (PubMed:12867450).</text>
    </kinetics>
</comment>
<comment type="pathway">
    <text evidence="14">Cell wall biogenesis; peptidoglycan biosynthesis.</text>
</comment>
<comment type="subunit">
    <text evidence="1 8 9">Homodimer. May also form higher order oligomers. Self-association may depend on its transmembrane and/or cytoplasmic regions (PubMed:22487093). Interacts with MacP; interaction is required for the function of this protein (By similarity). Interacts with MreC in the elongasome (PubMed:28710862).</text>
</comment>
<comment type="subcellular location">
    <subcellularLocation>
        <location evidence="6 7 8">Cell membrane</location>
        <topology evidence="6 7 8">Single-pass type II membrane protein</topology>
    </subcellularLocation>
    <subcellularLocation>
        <location evidence="14">Secreted</location>
        <location evidence="14">Cell wall</location>
    </subcellularLocation>
    <text evidence="1">Localizes to sites of new peptidoglycan (PG) synthesis at midcell independently of MacP.</text>
</comment>
<comment type="domain">
    <text evidence="6 7 8">Has a penicillin-insensitive transglycosylase/glycosyltransferase (GT) N-terminal domain (formation of linear glycan strands) and a penicillin-sensitive transpeptidase C-terminal domain (cross-linking of the peptide subunits) (PubMed:10217767, PubMed:12867450, PubMed:22487093). Transmembrane signal-anchor is required for the synthesis of longer, 20-30 disaccharide units containing, glycan chains (PubMed:22487093).</text>
</comment>
<comment type="mass spectrometry" mass="80797.0" method="Electrospray" evidence="8"/>
<comment type="biotechnology">
    <text evidence="16">Transglycosylase/glycosyltransferase (GT) domain of this protein may be an alternative target for the development of new inhibitors of S.pneumoniae as the beta-lactam antibiotics targeted against the transpeptidase domain of this protein have increasing resistance.</text>
</comment>
<comment type="similarity">
    <text evidence="14">In the N-terminal section; belongs to the glycosyltransferase 51 family.</text>
</comment>
<comment type="similarity">
    <text evidence="14">In the C-terminal section; belongs to the transpeptidase family.</text>
</comment>